<keyword id="KW-0964">Secreted</keyword>
<feature type="chain" id="PRO_0000431343" description="Putative prophage major tail sheath protein">
    <location>
        <begin position="1"/>
        <end position="386"/>
    </location>
</feature>
<name>Y807_PSEAB</name>
<evidence type="ECO:0000269" key="1">
    <source>
    </source>
</evidence>
<evidence type="ECO:0000303" key="2">
    <source>
    </source>
</evidence>
<evidence type="ECO:0000305" key="3"/>
<evidence type="ECO:0000305" key="4">
    <source>
    </source>
</evidence>
<gene>
    <name evidence="2" type="primary">gpFI</name>
    <name type="ordered locus">PA14_08070</name>
</gene>
<comment type="subcellular location">
    <subcellularLocation>
        <location evidence="1">Secreted</location>
    </subcellularLocation>
</comment>
<comment type="miscellaneous">
    <text evidence="4">The gene for this protein is encoded in a region with many other potential prophage genes.</text>
</comment>
<comment type="similarity">
    <text evidence="3">Belongs to the myoviridae tail sheath protein family.</text>
</comment>
<proteinExistence type="evidence at protein level"/>
<dbReference type="EMBL" id="CP000438">
    <property type="protein sequence ID" value="ABJ15586.1"/>
    <property type="molecule type" value="Genomic_DNA"/>
</dbReference>
<dbReference type="RefSeq" id="WP_003109051.1">
    <property type="nucleotide sequence ID" value="NZ_CP034244.1"/>
</dbReference>
<dbReference type="SMR" id="Q02TE1"/>
<dbReference type="KEGG" id="pau:PA14_08070"/>
<dbReference type="PseudoCAP" id="PA14_08070"/>
<dbReference type="HOGENOM" id="CLU_037707_0_0_6"/>
<dbReference type="BioCyc" id="PAER208963:G1G74-667-MONOMER"/>
<dbReference type="Proteomes" id="UP000000653">
    <property type="component" value="Chromosome"/>
</dbReference>
<dbReference type="GO" id="GO:0005576">
    <property type="term" value="C:extracellular region"/>
    <property type="evidence" value="ECO:0007669"/>
    <property type="project" value="UniProtKB-SubCell"/>
</dbReference>
<dbReference type="FunFam" id="3.40.50.11780:FF:000001">
    <property type="entry name" value="Major tail sheath protein"/>
    <property type="match status" value="1"/>
</dbReference>
<dbReference type="Gene3D" id="3.40.50.11780">
    <property type="match status" value="1"/>
</dbReference>
<dbReference type="InterPro" id="IPR054564">
    <property type="entry name" value="Gp18_domIII_N"/>
</dbReference>
<dbReference type="InterPro" id="IPR035089">
    <property type="entry name" value="Phage_sheath_subtilisin"/>
</dbReference>
<dbReference type="InterPro" id="IPR052042">
    <property type="entry name" value="Phage_Tail_Sheath_Structural"/>
</dbReference>
<dbReference type="InterPro" id="IPR020287">
    <property type="entry name" value="Tail_sheath_C"/>
</dbReference>
<dbReference type="PANTHER" id="PTHR35861">
    <property type="match status" value="1"/>
</dbReference>
<dbReference type="PANTHER" id="PTHR35861:SF1">
    <property type="entry name" value="PHAGE TAIL SHEATH PROTEIN"/>
    <property type="match status" value="1"/>
</dbReference>
<dbReference type="Pfam" id="PF22671">
    <property type="entry name" value="Gp18_domIII_N"/>
    <property type="match status" value="1"/>
</dbReference>
<dbReference type="Pfam" id="PF04984">
    <property type="entry name" value="Phage_sheath_1"/>
    <property type="match status" value="1"/>
</dbReference>
<dbReference type="Pfam" id="PF17482">
    <property type="entry name" value="Phage_sheath_1C"/>
    <property type="match status" value="1"/>
</dbReference>
<sequence>MSFFHGVTVTNVDIGARTIALPASSVIGLCDVFTPGAQASAKPNVPVLLTSKKDAAAAFGIGSSIYLACEAIYNRAQAVIVAVGVEAAETPEAQASAVIGGVSAAGERTGLQALLDGKSRFNAQPRLLVAPGHSAQQAVATAMDGLAEKLRAIAILDGPNSTDEAAVAYAKNFGSKRLFMVDPGVQVWDSATNAARKAPASAYAAGLFAWTDAEYGFWSSPSNKEIKGITGTSRPVEFLDGDETCRANLLNNANIATIIRDDGYRLWGNRTLSSDSKWAFVTRVRTMDLVMDAILAGHKWAVDRGITKTYVKDVTEGLRAFMRDLKNQGAVINFEVYADPDLNSASQLAQGKVYWNIRFTDVPPAENPNFRVEVTDQWLTEVLDVA</sequence>
<protein>
    <recommendedName>
        <fullName>Putative prophage major tail sheath protein</fullName>
    </recommendedName>
</protein>
<organism>
    <name type="scientific">Pseudomonas aeruginosa (strain UCBPP-PA14)</name>
    <dbReference type="NCBI Taxonomy" id="208963"/>
    <lineage>
        <taxon>Bacteria</taxon>
        <taxon>Pseudomonadati</taxon>
        <taxon>Pseudomonadota</taxon>
        <taxon>Gammaproteobacteria</taxon>
        <taxon>Pseudomonadales</taxon>
        <taxon>Pseudomonadaceae</taxon>
        <taxon>Pseudomonas</taxon>
    </lineage>
</organism>
<accession>Q02TE1</accession>
<reference key="1">
    <citation type="journal article" date="2006" name="Genome Biol.">
        <title>Genomic analysis reveals that Pseudomonas aeruginosa virulence is combinatorial.</title>
        <authorList>
            <person name="Lee D.G."/>
            <person name="Urbach J.M."/>
            <person name="Wu G."/>
            <person name="Liberati N.T."/>
            <person name="Feinbaum R.L."/>
            <person name="Miyata S."/>
            <person name="Diggins L.T."/>
            <person name="He J."/>
            <person name="Saucier M."/>
            <person name="Deziel E."/>
            <person name="Friedman L."/>
            <person name="Li L."/>
            <person name="Grills G."/>
            <person name="Montgomery K."/>
            <person name="Kucherlapati R."/>
            <person name="Rahme L.G."/>
            <person name="Ausubel F.M."/>
        </authorList>
    </citation>
    <scope>NUCLEOTIDE SEQUENCE [LARGE SCALE GENOMIC DNA]</scope>
    <source>
        <strain>UCBPP-PA14</strain>
    </source>
</reference>
<reference key="2">
    <citation type="journal article" date="2014" name="Proteomics">
        <title>Extracellular Ser/Thr/Tyr phosphorylated proteins of Pseudomonas aeruginosa PA14 strain.</title>
        <authorList>
            <person name="Ouidir T."/>
            <person name="Jarnier F."/>
            <person name="Cosette P."/>
            <person name="Jouenne T."/>
            <person name="Hardouin J."/>
        </authorList>
    </citation>
    <scope>IDENTIFICATION BY MASS SPECTROMETRY</scope>
    <scope>SUBCELLULAR LOCATION</scope>
    <source>
        <strain>UCBPP-PA14</strain>
    </source>
</reference>